<comment type="function">
    <text evidence="1">Catalyzes the CTP-dependent phosphorylation of riboflavin (vitamin B2) to form flavin mononucleotide (FMN).</text>
</comment>
<comment type="catalytic activity">
    <reaction>
        <text>riboflavin + CTP = CDP + FMN + H(+)</text>
        <dbReference type="Rhea" id="RHEA:25021"/>
        <dbReference type="ChEBI" id="CHEBI:15378"/>
        <dbReference type="ChEBI" id="CHEBI:37563"/>
        <dbReference type="ChEBI" id="CHEBI:57986"/>
        <dbReference type="ChEBI" id="CHEBI:58069"/>
        <dbReference type="ChEBI" id="CHEBI:58210"/>
        <dbReference type="EC" id="2.7.1.161"/>
    </reaction>
</comment>
<comment type="cofactor">
    <cofactor evidence="1">
        <name>Mg(2+)</name>
        <dbReference type="ChEBI" id="CHEBI:18420"/>
    </cofactor>
    <text evidence="1">Binds 1 Mg(2+) ion per subunit.</text>
</comment>
<comment type="pathway">
    <text>Cofactor biosynthesis; FMN biosynthesis; FMN from riboflavin (CTP route): step 1/1.</text>
</comment>
<comment type="similarity">
    <text evidence="2">Belongs to the archaeal riboflavin kinase family.</text>
</comment>
<sequence>MENIYIALKTIKKMAGEKNTVFISSKELANEMNVSQQTASRIIISLDRLGYITRTLENRKQKITINDSGLDVLYREYNEISSILRFSQELKLVGAVQDGLGEGKYYISKKGYKDQFIAKLGIDPYPGTLNIKILNEYENNLRRIKNSDGIYITGFKDQQRTFGGVFCHAARIDGIRCFIIFPERSVYRDTFEVISEKYLRKELNLENGAIIEVLASIDGKL</sequence>
<dbReference type="EC" id="2.7.1.161"/>
<dbReference type="EMBL" id="AE017261">
    <property type="protein sequence ID" value="AAT43554.1"/>
    <property type="molecule type" value="Genomic_DNA"/>
</dbReference>
<dbReference type="RefSeq" id="WP_011177770.1">
    <property type="nucleotide sequence ID" value="NC_005877.1"/>
</dbReference>
<dbReference type="SMR" id="Q6L0E8"/>
<dbReference type="FunCoup" id="Q6L0E8">
    <property type="interactions" value="6"/>
</dbReference>
<dbReference type="STRING" id="263820.PTO0969"/>
<dbReference type="PaxDb" id="263820-PTO0969"/>
<dbReference type="GeneID" id="2844213"/>
<dbReference type="KEGG" id="pto:PTO0969"/>
<dbReference type="eggNOG" id="arCOG01904">
    <property type="taxonomic scope" value="Archaea"/>
</dbReference>
<dbReference type="HOGENOM" id="CLU_088476_0_0_2"/>
<dbReference type="InParanoid" id="Q6L0E8"/>
<dbReference type="OrthoDB" id="30955at2157"/>
<dbReference type="UniPathway" id="UPA00276">
    <property type="reaction ID" value="UER00929"/>
</dbReference>
<dbReference type="Proteomes" id="UP000000438">
    <property type="component" value="Chromosome"/>
</dbReference>
<dbReference type="GO" id="GO:0046872">
    <property type="term" value="F:metal ion binding"/>
    <property type="evidence" value="ECO:0007669"/>
    <property type="project" value="UniProtKB-KW"/>
</dbReference>
<dbReference type="GO" id="GO:0000166">
    <property type="term" value="F:nucleotide binding"/>
    <property type="evidence" value="ECO:0007669"/>
    <property type="project" value="UniProtKB-KW"/>
</dbReference>
<dbReference type="GO" id="GO:0008531">
    <property type="term" value="F:riboflavin kinase activity"/>
    <property type="evidence" value="ECO:0007669"/>
    <property type="project" value="InterPro"/>
</dbReference>
<dbReference type="GO" id="GO:0009398">
    <property type="term" value="P:FMN biosynthetic process"/>
    <property type="evidence" value="ECO:0007669"/>
    <property type="project" value="UniProtKB-UniPathway"/>
</dbReference>
<dbReference type="GO" id="GO:0009231">
    <property type="term" value="P:riboflavin biosynthetic process"/>
    <property type="evidence" value="ECO:0007669"/>
    <property type="project" value="InterPro"/>
</dbReference>
<dbReference type="Gene3D" id="2.40.30.30">
    <property type="entry name" value="Riboflavin kinase-like"/>
    <property type="match status" value="1"/>
</dbReference>
<dbReference type="Gene3D" id="1.10.10.10">
    <property type="entry name" value="Winged helix-like DNA-binding domain superfamily/Winged helix DNA-binding domain"/>
    <property type="match status" value="1"/>
</dbReference>
<dbReference type="InterPro" id="IPR039063">
    <property type="entry name" value="RibK_CTP-dep"/>
</dbReference>
<dbReference type="InterPro" id="IPR023602">
    <property type="entry name" value="Riboflavin_kinase_CTP-dep"/>
</dbReference>
<dbReference type="InterPro" id="IPR023465">
    <property type="entry name" value="Riboflavin_kinase_dom_sf"/>
</dbReference>
<dbReference type="InterPro" id="IPR036388">
    <property type="entry name" value="WH-like_DNA-bd_sf"/>
</dbReference>
<dbReference type="InterPro" id="IPR036390">
    <property type="entry name" value="WH_DNA-bd_sf"/>
</dbReference>
<dbReference type="NCBIfam" id="NF010762">
    <property type="entry name" value="PRK14165.1"/>
    <property type="match status" value="1"/>
</dbReference>
<dbReference type="PANTHER" id="PTHR40706">
    <property type="entry name" value="RIBOFLAVIN KINASE"/>
    <property type="match status" value="1"/>
</dbReference>
<dbReference type="PANTHER" id="PTHR40706:SF1">
    <property type="entry name" value="RIBOFLAVIN KINASE"/>
    <property type="match status" value="1"/>
</dbReference>
<dbReference type="Pfam" id="PF01982">
    <property type="entry name" value="CTP-dep_RFKase"/>
    <property type="match status" value="1"/>
</dbReference>
<dbReference type="SUPFAM" id="SSF82114">
    <property type="entry name" value="Riboflavin kinase-like"/>
    <property type="match status" value="1"/>
</dbReference>
<dbReference type="SUPFAM" id="SSF46785">
    <property type="entry name" value="Winged helix' DNA-binding domain"/>
    <property type="match status" value="1"/>
</dbReference>
<feature type="chain" id="PRO_0000322097" description="Riboflavin kinase">
    <location>
        <begin position="1"/>
        <end position="221"/>
    </location>
</feature>
<feature type="region of interest" description="H-T-H motif-like">
    <location>
        <begin position="1"/>
        <end position="89"/>
    </location>
</feature>
<feature type="region of interest" description="Riboflavin kinase">
    <location>
        <begin position="90"/>
        <end position="221"/>
    </location>
</feature>
<feature type="binding site" evidence="1">
    <location>
        <begin position="99"/>
        <end position="104"/>
    </location>
    <ligand>
        <name>CDP</name>
        <dbReference type="ChEBI" id="CHEBI:58069"/>
    </ligand>
</feature>
<feature type="binding site" evidence="1">
    <location>
        <position position="128"/>
    </location>
    <ligand>
        <name>Mg(2+)</name>
        <dbReference type="ChEBI" id="CHEBI:18420"/>
    </ligand>
</feature>
<feature type="binding site" evidence="1">
    <location>
        <position position="130"/>
    </location>
    <ligand>
        <name>Mg(2+)</name>
        <dbReference type="ChEBI" id="CHEBI:18420"/>
    </ligand>
</feature>
<feature type="binding site" evidence="1">
    <location>
        <position position="185"/>
    </location>
    <ligand>
        <name>FMN</name>
        <dbReference type="ChEBI" id="CHEBI:58210"/>
    </ligand>
</feature>
<feature type="binding site" evidence="1">
    <location>
        <position position="192"/>
    </location>
    <ligand>
        <name>FMN</name>
        <dbReference type="ChEBI" id="CHEBI:58210"/>
    </ligand>
</feature>
<feature type="binding site" evidence="1">
    <location>
        <begin position="197"/>
        <end position="200"/>
    </location>
    <ligand>
        <name>CDP</name>
        <dbReference type="ChEBI" id="CHEBI:58069"/>
    </ligand>
</feature>
<accession>Q6L0E8</accession>
<gene>
    <name type="primary">ribK</name>
    <name type="ordered locus">PTO0969</name>
</gene>
<protein>
    <recommendedName>
        <fullName>Riboflavin kinase</fullName>
        <shortName>RFK</shortName>
        <ecNumber>2.7.1.161</ecNumber>
    </recommendedName>
    <alternativeName>
        <fullName>CTP-dependent riboflavin kinase</fullName>
    </alternativeName>
    <alternativeName>
        <fullName>CTP:riboflavin 5'-phosphotransferase</fullName>
    </alternativeName>
    <alternativeName>
        <fullName>Flavokinase</fullName>
    </alternativeName>
</protein>
<name>RIFK_PICTO</name>
<evidence type="ECO:0000250" key="1"/>
<evidence type="ECO:0000305" key="2"/>
<reference key="1">
    <citation type="journal article" date="2004" name="Proc. Natl. Acad. Sci. U.S.A.">
        <title>Genome sequence of Picrophilus torridus and its implications for life around pH 0.</title>
        <authorList>
            <person name="Fuetterer O."/>
            <person name="Angelov A."/>
            <person name="Liesegang H."/>
            <person name="Gottschalk G."/>
            <person name="Schleper C."/>
            <person name="Schepers B."/>
            <person name="Dock C."/>
            <person name="Antranikian G."/>
            <person name="Liebl W."/>
        </authorList>
    </citation>
    <scope>NUCLEOTIDE SEQUENCE [LARGE SCALE GENOMIC DNA]</scope>
    <source>
        <strain>ATCC 700027 / DSM 9790 / JCM 10055 / NBRC 100828 / KAW 2/3</strain>
    </source>
</reference>
<organism>
    <name type="scientific">Picrophilus torridus (strain ATCC 700027 / DSM 9790 / JCM 10055 / NBRC 100828 / KAW 2/3)</name>
    <dbReference type="NCBI Taxonomy" id="1122961"/>
    <lineage>
        <taxon>Archaea</taxon>
        <taxon>Methanobacteriati</taxon>
        <taxon>Thermoplasmatota</taxon>
        <taxon>Thermoplasmata</taxon>
        <taxon>Thermoplasmatales</taxon>
        <taxon>Picrophilaceae</taxon>
        <taxon>Picrophilus</taxon>
    </lineage>
</organism>
<proteinExistence type="inferred from homology"/>
<keyword id="KW-0285">Flavoprotein</keyword>
<keyword id="KW-0288">FMN</keyword>
<keyword id="KW-0418">Kinase</keyword>
<keyword id="KW-0460">Magnesium</keyword>
<keyword id="KW-0479">Metal-binding</keyword>
<keyword id="KW-0547">Nucleotide-binding</keyword>
<keyword id="KW-0808">Transferase</keyword>